<feature type="chain" id="PRO_0000151489" description="Phosphoribosylamine--glycine ligase">
    <location>
        <begin position="1"/>
        <end position="421"/>
    </location>
</feature>
<feature type="domain" description="ATP-grasp" evidence="2">
    <location>
        <begin position="108"/>
        <end position="314"/>
    </location>
</feature>
<feature type="binding site" evidence="2">
    <location>
        <begin position="134"/>
        <end position="195"/>
    </location>
    <ligand>
        <name>ATP</name>
        <dbReference type="ChEBI" id="CHEBI:30616"/>
    </ligand>
</feature>
<feature type="binding site" evidence="2">
    <location>
        <position position="284"/>
    </location>
    <ligand>
        <name>Mg(2+)</name>
        <dbReference type="ChEBI" id="CHEBI:18420"/>
    </ligand>
</feature>
<feature type="binding site" evidence="2">
    <location>
        <position position="286"/>
    </location>
    <ligand>
        <name>Mg(2+)</name>
        <dbReference type="ChEBI" id="CHEBI:18420"/>
    </ligand>
</feature>
<name>PUR2_STRP1</name>
<accession>Q9A1Y7</accession>
<accession>Q491S0</accession>
<comment type="catalytic activity">
    <reaction evidence="2">
        <text>5-phospho-beta-D-ribosylamine + glycine + ATP = N(1)-(5-phospho-beta-D-ribosyl)glycinamide + ADP + phosphate + H(+)</text>
        <dbReference type="Rhea" id="RHEA:17453"/>
        <dbReference type="ChEBI" id="CHEBI:15378"/>
        <dbReference type="ChEBI" id="CHEBI:30616"/>
        <dbReference type="ChEBI" id="CHEBI:43474"/>
        <dbReference type="ChEBI" id="CHEBI:57305"/>
        <dbReference type="ChEBI" id="CHEBI:58681"/>
        <dbReference type="ChEBI" id="CHEBI:143788"/>
        <dbReference type="ChEBI" id="CHEBI:456216"/>
        <dbReference type="EC" id="6.3.4.13"/>
    </reaction>
</comment>
<comment type="cofactor">
    <cofactor evidence="1">
        <name>Mg(2+)</name>
        <dbReference type="ChEBI" id="CHEBI:18420"/>
    </cofactor>
    <cofactor evidence="1">
        <name>Mn(2+)</name>
        <dbReference type="ChEBI" id="CHEBI:29035"/>
    </cofactor>
    <text evidence="1">Binds 1 Mg(2+) or Mn(2+) ion per subunit.</text>
</comment>
<comment type="pathway">
    <text evidence="2">Purine metabolism; IMP biosynthesis via de novo pathway; N(1)-(5-phospho-D-ribosyl)glycinamide from 5-phospho-alpha-D-ribose 1-diphosphate: step 2/2.</text>
</comment>
<comment type="similarity">
    <text evidence="2">Belongs to the GARS family.</text>
</comment>
<comment type="sequence caution" evidence="3">
    <conflict type="erroneous initiation">
        <sequence resource="EMBL-CDS" id="AAZ50648"/>
    </conflict>
</comment>
<dbReference type="EC" id="6.3.4.13" evidence="2"/>
<dbReference type="EMBL" id="AE004092">
    <property type="protein sequence ID" value="AAK33169.1"/>
    <property type="molecule type" value="Genomic_DNA"/>
</dbReference>
<dbReference type="EMBL" id="CP000017">
    <property type="protein sequence ID" value="AAZ50648.1"/>
    <property type="status" value="ALT_INIT"/>
    <property type="molecule type" value="Genomic_DNA"/>
</dbReference>
<dbReference type="RefSeq" id="NP_268447.1">
    <property type="nucleotide sequence ID" value="NC_002737.2"/>
</dbReference>
<dbReference type="SMR" id="Q9A1Y7"/>
<dbReference type="PaxDb" id="1314-HKU360_00061"/>
<dbReference type="KEGG" id="spy:SPy_0032"/>
<dbReference type="KEGG" id="spz:M5005_Spy0029"/>
<dbReference type="PATRIC" id="fig|160490.10.peg.30"/>
<dbReference type="HOGENOM" id="CLU_027420_3_1_9"/>
<dbReference type="OMA" id="KATVCKY"/>
<dbReference type="UniPathway" id="UPA00074">
    <property type="reaction ID" value="UER00125"/>
</dbReference>
<dbReference type="Proteomes" id="UP000000750">
    <property type="component" value="Chromosome"/>
</dbReference>
<dbReference type="GO" id="GO:0005524">
    <property type="term" value="F:ATP binding"/>
    <property type="evidence" value="ECO:0007669"/>
    <property type="project" value="UniProtKB-KW"/>
</dbReference>
<dbReference type="GO" id="GO:0046872">
    <property type="term" value="F:metal ion binding"/>
    <property type="evidence" value="ECO:0007669"/>
    <property type="project" value="UniProtKB-KW"/>
</dbReference>
<dbReference type="GO" id="GO:0004637">
    <property type="term" value="F:phosphoribosylamine-glycine ligase activity"/>
    <property type="evidence" value="ECO:0007669"/>
    <property type="project" value="UniProtKB-UniRule"/>
</dbReference>
<dbReference type="GO" id="GO:0006189">
    <property type="term" value="P:'de novo' IMP biosynthetic process"/>
    <property type="evidence" value="ECO:0007669"/>
    <property type="project" value="UniProtKB-UniRule"/>
</dbReference>
<dbReference type="GO" id="GO:0009113">
    <property type="term" value="P:purine nucleobase biosynthetic process"/>
    <property type="evidence" value="ECO:0007669"/>
    <property type="project" value="InterPro"/>
</dbReference>
<dbReference type="FunFam" id="3.30.1490.20:FF:000006">
    <property type="entry name" value="phosphoribosylamine--glycine ligase, chloroplastic-like"/>
    <property type="match status" value="1"/>
</dbReference>
<dbReference type="Gene3D" id="3.40.50.20">
    <property type="match status" value="1"/>
</dbReference>
<dbReference type="Gene3D" id="3.30.1490.20">
    <property type="entry name" value="ATP-grasp fold, A domain"/>
    <property type="match status" value="1"/>
</dbReference>
<dbReference type="Gene3D" id="3.30.470.20">
    <property type="entry name" value="ATP-grasp fold, B domain"/>
    <property type="match status" value="1"/>
</dbReference>
<dbReference type="Gene3D" id="3.90.600.10">
    <property type="entry name" value="Phosphoribosylglycinamide synthetase, C-terminal domain"/>
    <property type="match status" value="1"/>
</dbReference>
<dbReference type="HAMAP" id="MF_00138">
    <property type="entry name" value="GARS"/>
    <property type="match status" value="1"/>
</dbReference>
<dbReference type="InterPro" id="IPR011761">
    <property type="entry name" value="ATP-grasp"/>
</dbReference>
<dbReference type="InterPro" id="IPR013815">
    <property type="entry name" value="ATP_grasp_subdomain_1"/>
</dbReference>
<dbReference type="InterPro" id="IPR016185">
    <property type="entry name" value="PreATP-grasp_dom_sf"/>
</dbReference>
<dbReference type="InterPro" id="IPR020561">
    <property type="entry name" value="PRibGlycinamid_synth_ATP-grasp"/>
</dbReference>
<dbReference type="InterPro" id="IPR000115">
    <property type="entry name" value="PRibGlycinamide_synth"/>
</dbReference>
<dbReference type="InterPro" id="IPR020560">
    <property type="entry name" value="PRibGlycinamide_synth_C-dom"/>
</dbReference>
<dbReference type="InterPro" id="IPR037123">
    <property type="entry name" value="PRibGlycinamide_synth_C_sf"/>
</dbReference>
<dbReference type="InterPro" id="IPR020559">
    <property type="entry name" value="PRibGlycinamide_synth_CS"/>
</dbReference>
<dbReference type="InterPro" id="IPR020562">
    <property type="entry name" value="PRibGlycinamide_synth_N"/>
</dbReference>
<dbReference type="InterPro" id="IPR011054">
    <property type="entry name" value="Rudment_hybrid_motif"/>
</dbReference>
<dbReference type="NCBIfam" id="TIGR00877">
    <property type="entry name" value="purD"/>
    <property type="match status" value="1"/>
</dbReference>
<dbReference type="PANTHER" id="PTHR43472">
    <property type="entry name" value="PHOSPHORIBOSYLAMINE--GLYCINE LIGASE"/>
    <property type="match status" value="1"/>
</dbReference>
<dbReference type="PANTHER" id="PTHR43472:SF1">
    <property type="entry name" value="PHOSPHORIBOSYLAMINE--GLYCINE LIGASE, CHLOROPLASTIC"/>
    <property type="match status" value="1"/>
</dbReference>
<dbReference type="Pfam" id="PF01071">
    <property type="entry name" value="GARS_A"/>
    <property type="match status" value="1"/>
</dbReference>
<dbReference type="Pfam" id="PF02843">
    <property type="entry name" value="GARS_C"/>
    <property type="match status" value="1"/>
</dbReference>
<dbReference type="Pfam" id="PF02844">
    <property type="entry name" value="GARS_N"/>
    <property type="match status" value="1"/>
</dbReference>
<dbReference type="SMART" id="SM01209">
    <property type="entry name" value="GARS_A"/>
    <property type="match status" value="1"/>
</dbReference>
<dbReference type="SMART" id="SM01210">
    <property type="entry name" value="GARS_C"/>
    <property type="match status" value="1"/>
</dbReference>
<dbReference type="SUPFAM" id="SSF56059">
    <property type="entry name" value="Glutathione synthetase ATP-binding domain-like"/>
    <property type="match status" value="1"/>
</dbReference>
<dbReference type="SUPFAM" id="SSF52440">
    <property type="entry name" value="PreATP-grasp domain"/>
    <property type="match status" value="1"/>
</dbReference>
<dbReference type="SUPFAM" id="SSF51246">
    <property type="entry name" value="Rudiment single hybrid motif"/>
    <property type="match status" value="1"/>
</dbReference>
<dbReference type="PROSITE" id="PS50975">
    <property type="entry name" value="ATP_GRASP"/>
    <property type="match status" value="1"/>
</dbReference>
<dbReference type="PROSITE" id="PS00184">
    <property type="entry name" value="GARS"/>
    <property type="match status" value="1"/>
</dbReference>
<evidence type="ECO:0000250" key="1"/>
<evidence type="ECO:0000255" key="2">
    <source>
        <dbReference type="HAMAP-Rule" id="MF_00138"/>
    </source>
</evidence>
<evidence type="ECO:0000305" key="3"/>
<keyword id="KW-0067">ATP-binding</keyword>
<keyword id="KW-0436">Ligase</keyword>
<keyword id="KW-0460">Magnesium</keyword>
<keyword id="KW-0464">Manganese</keyword>
<keyword id="KW-0479">Metal-binding</keyword>
<keyword id="KW-0547">Nucleotide-binding</keyword>
<keyword id="KW-0658">Purine biosynthesis</keyword>
<keyword id="KW-1185">Reference proteome</keyword>
<organism>
    <name type="scientific">Streptococcus pyogenes serotype M1</name>
    <dbReference type="NCBI Taxonomy" id="301447"/>
    <lineage>
        <taxon>Bacteria</taxon>
        <taxon>Bacillati</taxon>
        <taxon>Bacillota</taxon>
        <taxon>Bacilli</taxon>
        <taxon>Lactobacillales</taxon>
        <taxon>Streptococcaceae</taxon>
        <taxon>Streptococcus</taxon>
    </lineage>
</organism>
<proteinExistence type="inferred from homology"/>
<sequence length="421" mass="45481">MKLLVVGSGGREHAIAKKLLASKGVDQVFVAPGNDGMTLDGLDLVNIVVSEHSRLIAFAKENEISWAFIGPDDALAAGIVDDFNSAGLRAFGPTKAAAELEWSKDFAKEIMVKYNVPTAAYGTFSDFEKAKAYIEEQGAPIVVKADGLALGKGVVVAETVEQAVEAAQEMLLDNKFGDSGARVVIEEFLDGEEFSLFAFANGDKFYIMPTAQDHKRAFDGDKGPNTGGMGAYAPVPHLPQSVVDTAVEMIVRPVLEGMVAEGRPYLGVLYVGLILTADGPKVIEFNSRFGDPETQIILPRLTSDFAQNIDDIMMGIEPYITWQKDGVTLGVVVASEGYPFDYEKGVPLPEKTDGDIITYYAGVKFSENSELLLSNGGRVYMLVTTEDSVKAGQDKIYTQLAQQDTTGLFYRNDIGSKAIRE</sequence>
<gene>
    <name evidence="2" type="primary">purD</name>
    <name type="ordered locus">SPy_0032</name>
    <name type="ordered locus">M5005_Spy0029</name>
</gene>
<reference key="1">
    <citation type="journal article" date="2001" name="Proc. Natl. Acad. Sci. U.S.A.">
        <title>Complete genome sequence of an M1 strain of Streptococcus pyogenes.</title>
        <authorList>
            <person name="Ferretti J.J."/>
            <person name="McShan W.M."/>
            <person name="Ajdic D.J."/>
            <person name="Savic D.J."/>
            <person name="Savic G."/>
            <person name="Lyon K."/>
            <person name="Primeaux C."/>
            <person name="Sezate S."/>
            <person name="Suvorov A.N."/>
            <person name="Kenton S."/>
            <person name="Lai H.S."/>
            <person name="Lin S.P."/>
            <person name="Qian Y."/>
            <person name="Jia H.G."/>
            <person name="Najar F.Z."/>
            <person name="Ren Q."/>
            <person name="Zhu H."/>
            <person name="Song L."/>
            <person name="White J."/>
            <person name="Yuan X."/>
            <person name="Clifton S.W."/>
            <person name="Roe B.A."/>
            <person name="McLaughlin R.E."/>
        </authorList>
    </citation>
    <scope>NUCLEOTIDE SEQUENCE [LARGE SCALE GENOMIC DNA]</scope>
    <source>
        <strain>ATCC 700294 / SF370 / Serotype M1</strain>
    </source>
</reference>
<reference key="2">
    <citation type="journal article" date="2005" name="J. Infect. Dis.">
        <title>Evolutionary origin and emergence of a highly successful clone of serotype M1 group A Streptococcus involved multiple horizontal gene transfer events.</title>
        <authorList>
            <person name="Sumby P."/>
            <person name="Porcella S.F."/>
            <person name="Madrigal A.G."/>
            <person name="Barbian K.D."/>
            <person name="Virtaneva K."/>
            <person name="Ricklefs S.M."/>
            <person name="Sturdevant D.E."/>
            <person name="Graham M.R."/>
            <person name="Vuopio-Varkila J."/>
            <person name="Hoe N.P."/>
            <person name="Musser J.M."/>
        </authorList>
    </citation>
    <scope>NUCLEOTIDE SEQUENCE [LARGE SCALE GENOMIC DNA]</scope>
    <source>
        <strain>ATCC BAA-947 / MGAS5005 / Serotype M1</strain>
    </source>
</reference>
<protein>
    <recommendedName>
        <fullName evidence="2">Phosphoribosylamine--glycine ligase</fullName>
        <ecNumber evidence="2">6.3.4.13</ecNumber>
    </recommendedName>
    <alternativeName>
        <fullName evidence="2">GARS</fullName>
    </alternativeName>
    <alternativeName>
        <fullName evidence="2">Glycinamide ribonucleotide synthetase</fullName>
    </alternativeName>
    <alternativeName>
        <fullName evidence="2">Phosphoribosylglycinamide synthetase</fullName>
    </alternativeName>
</protein>